<name>NORM_XYLFT</name>
<evidence type="ECO:0000250" key="1"/>
<evidence type="ECO:0000255" key="2"/>
<evidence type="ECO:0000305" key="3"/>
<dbReference type="EMBL" id="AE009442">
    <property type="protein sequence ID" value="AAO29868.1"/>
    <property type="status" value="ALT_INIT"/>
    <property type="molecule type" value="Genomic_DNA"/>
</dbReference>
<dbReference type="SMR" id="Q879Z5"/>
<dbReference type="KEGG" id="xft:PD_2044"/>
<dbReference type="HOGENOM" id="CLU_012893_6_0_6"/>
<dbReference type="Proteomes" id="UP000002516">
    <property type="component" value="Chromosome"/>
</dbReference>
<dbReference type="GO" id="GO:0005886">
    <property type="term" value="C:plasma membrane"/>
    <property type="evidence" value="ECO:0007669"/>
    <property type="project" value="UniProtKB-SubCell"/>
</dbReference>
<dbReference type="GO" id="GO:0015297">
    <property type="term" value="F:antiporter activity"/>
    <property type="evidence" value="ECO:0007669"/>
    <property type="project" value="UniProtKB-KW"/>
</dbReference>
<dbReference type="GO" id="GO:0042910">
    <property type="term" value="F:xenobiotic transmembrane transporter activity"/>
    <property type="evidence" value="ECO:0007669"/>
    <property type="project" value="InterPro"/>
</dbReference>
<dbReference type="GO" id="GO:0006811">
    <property type="term" value="P:monoatomic ion transport"/>
    <property type="evidence" value="ECO:0007669"/>
    <property type="project" value="UniProtKB-KW"/>
</dbReference>
<dbReference type="CDD" id="cd13131">
    <property type="entry name" value="MATE_NorM_like"/>
    <property type="match status" value="1"/>
</dbReference>
<dbReference type="InterPro" id="IPR002528">
    <property type="entry name" value="MATE_fam"/>
</dbReference>
<dbReference type="InterPro" id="IPR050222">
    <property type="entry name" value="MATE_MdtK"/>
</dbReference>
<dbReference type="NCBIfam" id="TIGR00797">
    <property type="entry name" value="matE"/>
    <property type="match status" value="1"/>
</dbReference>
<dbReference type="PANTHER" id="PTHR43298:SF2">
    <property type="entry name" value="FMN_FAD EXPORTER YEEO-RELATED"/>
    <property type="match status" value="1"/>
</dbReference>
<dbReference type="PANTHER" id="PTHR43298">
    <property type="entry name" value="MULTIDRUG RESISTANCE PROTEIN NORM-RELATED"/>
    <property type="match status" value="1"/>
</dbReference>
<dbReference type="Pfam" id="PF01554">
    <property type="entry name" value="MatE"/>
    <property type="match status" value="2"/>
</dbReference>
<organism>
    <name type="scientific">Xylella fastidiosa (strain Temecula1 / ATCC 700964)</name>
    <dbReference type="NCBI Taxonomy" id="183190"/>
    <lineage>
        <taxon>Bacteria</taxon>
        <taxon>Pseudomonadati</taxon>
        <taxon>Pseudomonadota</taxon>
        <taxon>Gammaproteobacteria</taxon>
        <taxon>Lysobacterales</taxon>
        <taxon>Lysobacteraceae</taxon>
        <taxon>Xylella</taxon>
    </lineage>
</organism>
<comment type="function">
    <text evidence="1">Multidrug efflux pump.</text>
</comment>
<comment type="subcellular location">
    <subcellularLocation>
        <location evidence="1">Cell inner membrane</location>
        <topology evidence="1">Multi-pass membrane protein</topology>
    </subcellularLocation>
</comment>
<comment type="similarity">
    <text evidence="3">Belongs to the multi antimicrobial extrusion (MATE) (TC 2.A.66.1) family.</text>
</comment>
<comment type="sequence caution" evidence="3">
    <conflict type="erroneous initiation">
        <sequence resource="EMBL-CDS" id="AAO29868"/>
    </conflict>
</comment>
<proteinExistence type="inferred from homology"/>
<feature type="chain" id="PRO_0000164252" description="Probable multidrug resistance protein NorM">
    <location>
        <begin position="1"/>
        <end position="469"/>
    </location>
</feature>
<feature type="transmembrane region" description="Helical" evidence="2">
    <location>
        <begin position="10"/>
        <end position="30"/>
    </location>
</feature>
<feature type="transmembrane region" description="Helical" evidence="2">
    <location>
        <begin position="34"/>
        <end position="54"/>
    </location>
</feature>
<feature type="transmembrane region" description="Helical" evidence="2">
    <location>
        <begin position="74"/>
        <end position="94"/>
    </location>
</feature>
<feature type="transmembrane region" description="Helical" evidence="2">
    <location>
        <begin position="121"/>
        <end position="141"/>
    </location>
</feature>
<feature type="transmembrane region" description="Helical" evidence="2">
    <location>
        <begin position="179"/>
        <end position="199"/>
    </location>
</feature>
<feature type="transmembrane region" description="Helical" evidence="2">
    <location>
        <begin position="214"/>
        <end position="234"/>
    </location>
</feature>
<feature type="transmembrane region" description="Helical" evidence="2">
    <location>
        <begin position="264"/>
        <end position="284"/>
    </location>
</feature>
<feature type="transmembrane region" description="Helical" evidence="2">
    <location>
        <begin position="292"/>
        <end position="312"/>
    </location>
</feature>
<feature type="transmembrane region" description="Helical" evidence="2">
    <location>
        <begin position="335"/>
        <end position="355"/>
    </location>
</feature>
<feature type="transmembrane region" description="Helical" evidence="2">
    <location>
        <begin position="369"/>
        <end position="389"/>
    </location>
</feature>
<feature type="transmembrane region" description="Helical" evidence="2">
    <location>
        <begin position="409"/>
        <end position="429"/>
    </location>
</feature>
<feature type="transmembrane region" description="Helical" evidence="2">
    <location>
        <begin position="437"/>
        <end position="457"/>
    </location>
</feature>
<gene>
    <name type="primary">norM</name>
    <name type="ordered locus">PD_2044</name>
</gene>
<reference key="1">
    <citation type="journal article" date="2003" name="J. Bacteriol.">
        <title>Comparative analyses of the complete genome sequences of Pierce's disease and citrus variegated chlorosis strains of Xylella fastidiosa.</title>
        <authorList>
            <person name="Van Sluys M.A."/>
            <person name="de Oliveira M.C."/>
            <person name="Monteiro-Vitorello C.B."/>
            <person name="Miyaki C.Y."/>
            <person name="Furlan L.R."/>
            <person name="Camargo L.E.A."/>
            <person name="da Silva A.C.R."/>
            <person name="Moon D.H."/>
            <person name="Takita M.A."/>
            <person name="Lemos E.G.M."/>
            <person name="Machado M.A."/>
            <person name="Ferro M.I.T."/>
            <person name="da Silva F.R."/>
            <person name="Goldman M.H.S."/>
            <person name="Goldman G.H."/>
            <person name="Lemos M.V.F."/>
            <person name="El-Dorry H."/>
            <person name="Tsai S.M."/>
            <person name="Carrer H."/>
            <person name="Carraro D.M."/>
            <person name="de Oliveira R.C."/>
            <person name="Nunes L.R."/>
            <person name="Siqueira W.J."/>
            <person name="Coutinho L.L."/>
            <person name="Kimura E.T."/>
            <person name="Ferro E.S."/>
            <person name="Harakava R."/>
            <person name="Kuramae E.E."/>
            <person name="Marino C.L."/>
            <person name="Giglioti E."/>
            <person name="Abreu I.L."/>
            <person name="Alves L.M.C."/>
            <person name="do Amaral A.M."/>
            <person name="Baia G.S."/>
            <person name="Blanco S.R."/>
            <person name="Brito M.S."/>
            <person name="Cannavan F.S."/>
            <person name="Celestino A.V."/>
            <person name="da Cunha A.F."/>
            <person name="Fenille R.C."/>
            <person name="Ferro J.A."/>
            <person name="Formighieri E.F."/>
            <person name="Kishi L.T."/>
            <person name="Leoni S.G."/>
            <person name="Oliveira A.R."/>
            <person name="Rosa V.E. Jr."/>
            <person name="Sassaki F.T."/>
            <person name="Sena J.A.D."/>
            <person name="de Souza A.A."/>
            <person name="Truffi D."/>
            <person name="Tsukumo F."/>
            <person name="Yanai G.M."/>
            <person name="Zaros L.G."/>
            <person name="Civerolo E.L."/>
            <person name="Simpson A.J.G."/>
            <person name="Almeida N.F. Jr."/>
            <person name="Setubal J.C."/>
            <person name="Kitajima J.P."/>
        </authorList>
    </citation>
    <scope>NUCLEOTIDE SEQUENCE [LARGE SCALE GENOMIC DNA]</scope>
    <source>
        <strain>Temecula1 / ATCC 700964</strain>
    </source>
</reference>
<accession>Q879Z5</accession>
<protein>
    <recommendedName>
        <fullName>Probable multidrug resistance protein NorM</fullName>
    </recommendedName>
    <alternativeName>
        <fullName>Multidrug-efflux transporter</fullName>
    </alternativeName>
</protein>
<sequence length="469" mass="51105">MFLPRPDFRIALSICFMAVSFVISRFGSEVRPTLLLALPLVLGHVSTGLIGFVLNVIAGHHSTVTLAASTIGTALLWLPMLVPMGTLISLTVLVSQLHGAERERDIGPLFRQALWLAMLLGLVMFTFLSVVPALLPLFGIVPDIVPGAAKFLHVVRWGSLAFPLYFCMRYFCEGMHCTFPTMLLGFGGLLVLVPLSYALTYGRFGFAEYGVEGLGIATVTVMWLQAVVFALYLWRSRRFAHLQLFAHLELPCWARIRDLLNIGLPIGISILMEGGLFIVTTLLIGRFGTDEIAAHQIALSVAQLCFMIPMGVAEATTVRIGHAVGRCDLLVMRRVAWAGYAIVIGTQTLSASVLLLGYDVIVAAYTDDLVVASLASKLLLFAAIFQFPDGLQMLSSGVLRGMKDTRVPMLLAMISYWGLGMPLGLGLGFALEWNSRGMWIGLIIGLTAAALLLGWRFRVVSERMFAGIP</sequence>
<keyword id="KW-0050">Antiport</keyword>
<keyword id="KW-0997">Cell inner membrane</keyword>
<keyword id="KW-1003">Cell membrane</keyword>
<keyword id="KW-0406">Ion transport</keyword>
<keyword id="KW-0472">Membrane</keyword>
<keyword id="KW-1185">Reference proteome</keyword>
<keyword id="KW-0812">Transmembrane</keyword>
<keyword id="KW-1133">Transmembrane helix</keyword>
<keyword id="KW-0813">Transport</keyword>